<name>NDHI_EUCGG</name>
<comment type="function">
    <text evidence="1">NDH shuttles electrons from NAD(P)H:plastoquinone, via FMN and iron-sulfur (Fe-S) centers, to quinones in the photosynthetic chain and possibly in a chloroplast respiratory chain. The immediate electron acceptor for the enzyme in this species is believed to be plastoquinone. Couples the redox reaction to proton translocation, and thus conserves the redox energy in a proton gradient.</text>
</comment>
<comment type="catalytic activity">
    <reaction evidence="1">
        <text>a plastoquinone + NADH + (n+1) H(+)(in) = a plastoquinol + NAD(+) + n H(+)(out)</text>
        <dbReference type="Rhea" id="RHEA:42608"/>
        <dbReference type="Rhea" id="RHEA-COMP:9561"/>
        <dbReference type="Rhea" id="RHEA-COMP:9562"/>
        <dbReference type="ChEBI" id="CHEBI:15378"/>
        <dbReference type="ChEBI" id="CHEBI:17757"/>
        <dbReference type="ChEBI" id="CHEBI:57540"/>
        <dbReference type="ChEBI" id="CHEBI:57945"/>
        <dbReference type="ChEBI" id="CHEBI:62192"/>
    </reaction>
</comment>
<comment type="catalytic activity">
    <reaction evidence="1">
        <text>a plastoquinone + NADPH + (n+1) H(+)(in) = a plastoquinol + NADP(+) + n H(+)(out)</text>
        <dbReference type="Rhea" id="RHEA:42612"/>
        <dbReference type="Rhea" id="RHEA-COMP:9561"/>
        <dbReference type="Rhea" id="RHEA-COMP:9562"/>
        <dbReference type="ChEBI" id="CHEBI:15378"/>
        <dbReference type="ChEBI" id="CHEBI:17757"/>
        <dbReference type="ChEBI" id="CHEBI:57783"/>
        <dbReference type="ChEBI" id="CHEBI:58349"/>
        <dbReference type="ChEBI" id="CHEBI:62192"/>
    </reaction>
</comment>
<comment type="cofactor">
    <cofactor evidence="1">
        <name>[4Fe-4S] cluster</name>
        <dbReference type="ChEBI" id="CHEBI:49883"/>
    </cofactor>
    <text evidence="1">Binds 2 [4Fe-4S] clusters per subunit.</text>
</comment>
<comment type="subunit">
    <text evidence="1">NDH is composed of at least 16 different subunits, 5 of which are encoded in the nucleus.</text>
</comment>
<comment type="subcellular location">
    <subcellularLocation>
        <location evidence="1">Plastid</location>
        <location evidence="1">Chloroplast thylakoid membrane</location>
        <topology evidence="1">Peripheral membrane protein</topology>
    </subcellularLocation>
</comment>
<comment type="similarity">
    <text evidence="1">Belongs to the complex I 23 kDa subunit family.</text>
</comment>
<proteinExistence type="inferred from homology"/>
<organism>
    <name type="scientific">Eucalyptus globulus subsp. globulus</name>
    <name type="common">Tasmanian blue gum</name>
    <dbReference type="NCBI Taxonomy" id="71271"/>
    <lineage>
        <taxon>Eukaryota</taxon>
        <taxon>Viridiplantae</taxon>
        <taxon>Streptophyta</taxon>
        <taxon>Embryophyta</taxon>
        <taxon>Tracheophyta</taxon>
        <taxon>Spermatophyta</taxon>
        <taxon>Magnoliopsida</taxon>
        <taxon>eudicotyledons</taxon>
        <taxon>Gunneridae</taxon>
        <taxon>Pentapetalae</taxon>
        <taxon>rosids</taxon>
        <taxon>malvids</taxon>
        <taxon>Myrtales</taxon>
        <taxon>Myrtaceae</taxon>
        <taxon>Myrtoideae</taxon>
        <taxon>Eucalypteae</taxon>
        <taxon>Eucalyptus</taxon>
    </lineage>
</organism>
<dbReference type="EC" id="7.1.1.-" evidence="1"/>
<dbReference type="EMBL" id="AY780259">
    <property type="protein sequence ID" value="AAX21082.1"/>
    <property type="molecule type" value="Genomic_DNA"/>
</dbReference>
<dbReference type="RefSeq" id="YP_636353.1">
    <property type="nucleotide sequence ID" value="NC_008115.1"/>
</dbReference>
<dbReference type="SMR" id="Q49KU4"/>
<dbReference type="GeneID" id="4108434"/>
<dbReference type="GO" id="GO:0009535">
    <property type="term" value="C:chloroplast thylakoid membrane"/>
    <property type="evidence" value="ECO:0007669"/>
    <property type="project" value="UniProtKB-SubCell"/>
</dbReference>
<dbReference type="GO" id="GO:0051539">
    <property type="term" value="F:4 iron, 4 sulfur cluster binding"/>
    <property type="evidence" value="ECO:0007669"/>
    <property type="project" value="UniProtKB-KW"/>
</dbReference>
<dbReference type="GO" id="GO:0005506">
    <property type="term" value="F:iron ion binding"/>
    <property type="evidence" value="ECO:0007669"/>
    <property type="project" value="UniProtKB-UniRule"/>
</dbReference>
<dbReference type="GO" id="GO:0008137">
    <property type="term" value="F:NADH dehydrogenase (ubiquinone) activity"/>
    <property type="evidence" value="ECO:0007669"/>
    <property type="project" value="InterPro"/>
</dbReference>
<dbReference type="GO" id="GO:0048038">
    <property type="term" value="F:quinone binding"/>
    <property type="evidence" value="ECO:0007669"/>
    <property type="project" value="UniProtKB-KW"/>
</dbReference>
<dbReference type="GO" id="GO:0019684">
    <property type="term" value="P:photosynthesis, light reaction"/>
    <property type="evidence" value="ECO:0007669"/>
    <property type="project" value="UniProtKB-UniRule"/>
</dbReference>
<dbReference type="FunFam" id="3.30.70.3270:FF:000006">
    <property type="entry name" value="NAD(P)H-quinone oxidoreductase subunit I, chloroplastic"/>
    <property type="match status" value="1"/>
</dbReference>
<dbReference type="Gene3D" id="3.30.70.3270">
    <property type="match status" value="1"/>
</dbReference>
<dbReference type="HAMAP" id="MF_01351">
    <property type="entry name" value="NDH1_NuoI"/>
    <property type="match status" value="1"/>
</dbReference>
<dbReference type="InterPro" id="IPR017896">
    <property type="entry name" value="4Fe4S_Fe-S-bd"/>
</dbReference>
<dbReference type="InterPro" id="IPR017900">
    <property type="entry name" value="4Fe4S_Fe_S_CS"/>
</dbReference>
<dbReference type="InterPro" id="IPR010226">
    <property type="entry name" value="NADH_quinone_OxRdtase_chainI"/>
</dbReference>
<dbReference type="InterPro" id="IPR004497">
    <property type="entry name" value="NDHI"/>
</dbReference>
<dbReference type="NCBIfam" id="TIGR00403">
    <property type="entry name" value="ndhI"/>
    <property type="match status" value="1"/>
</dbReference>
<dbReference type="NCBIfam" id="TIGR01971">
    <property type="entry name" value="NuoI"/>
    <property type="match status" value="1"/>
</dbReference>
<dbReference type="NCBIfam" id="NF004537">
    <property type="entry name" value="PRK05888.1-3"/>
    <property type="match status" value="1"/>
</dbReference>
<dbReference type="PANTHER" id="PTHR47275">
    <property type="entry name" value="NAD(P)H-QUINONE OXIDOREDUCTASE SUBUNIT I, CHLOROPLASTIC"/>
    <property type="match status" value="1"/>
</dbReference>
<dbReference type="PANTHER" id="PTHR47275:SF1">
    <property type="entry name" value="NAD(P)H-QUINONE OXIDOREDUCTASE SUBUNIT I, CHLOROPLASTIC"/>
    <property type="match status" value="1"/>
</dbReference>
<dbReference type="Pfam" id="PF00037">
    <property type="entry name" value="Fer4"/>
    <property type="match status" value="2"/>
</dbReference>
<dbReference type="SUPFAM" id="SSF54862">
    <property type="entry name" value="4Fe-4S ferredoxins"/>
    <property type="match status" value="1"/>
</dbReference>
<dbReference type="PROSITE" id="PS00198">
    <property type="entry name" value="4FE4S_FER_1"/>
    <property type="match status" value="2"/>
</dbReference>
<dbReference type="PROSITE" id="PS51379">
    <property type="entry name" value="4FE4S_FER_2"/>
    <property type="match status" value="2"/>
</dbReference>
<keyword id="KW-0004">4Fe-4S</keyword>
<keyword id="KW-0150">Chloroplast</keyword>
<keyword id="KW-0408">Iron</keyword>
<keyword id="KW-0411">Iron-sulfur</keyword>
<keyword id="KW-0472">Membrane</keyword>
<keyword id="KW-0479">Metal-binding</keyword>
<keyword id="KW-0520">NAD</keyword>
<keyword id="KW-0521">NADP</keyword>
<keyword id="KW-0934">Plastid</keyword>
<keyword id="KW-0618">Plastoquinone</keyword>
<keyword id="KW-0874">Quinone</keyword>
<keyword id="KW-0677">Repeat</keyword>
<keyword id="KW-0793">Thylakoid</keyword>
<keyword id="KW-1278">Translocase</keyword>
<accession>Q49KU4</accession>
<reference key="1">
    <citation type="journal article" date="2005" name="DNA Res.">
        <title>Complete nucleotide sequence of the chloroplast genome from the Tasmanian blue gum, Eucalyptus globulus (Myrtaceae).</title>
        <authorList>
            <person name="Steane D.A."/>
        </authorList>
    </citation>
    <scope>NUCLEOTIDE SEQUENCE [LARGE SCALE GENOMIC DNA]</scope>
</reference>
<evidence type="ECO:0000255" key="1">
    <source>
        <dbReference type="HAMAP-Rule" id="MF_01351"/>
    </source>
</evidence>
<gene>
    <name evidence="1" type="primary">ndhI</name>
</gene>
<sequence length="167" mass="19402">MFPMVTGFMNYGQQTVRAARYIGQGFMITLSHANRLPVTIQYPYEKLITSERFRGRIHFEFDKCIACEVCVRVCPIDLPVVDWKLETGIRKKRLLNYSIDFGICIFCGNCVEYCPTNCLSMTEEYELSTYDRHELNYNQIALGRLPMSVINDYTIRTISNSPQIIIK</sequence>
<protein>
    <recommendedName>
        <fullName evidence="1">NAD(P)H-quinone oxidoreductase subunit I, chloroplastic</fullName>
        <ecNumber evidence="1">7.1.1.-</ecNumber>
    </recommendedName>
    <alternativeName>
        <fullName evidence="1">NAD(P)H dehydrogenase subunit I</fullName>
        <shortName evidence="1">NDH subunit I</shortName>
    </alternativeName>
    <alternativeName>
        <fullName evidence="1">NADH-plastoquinone oxidoreductase subunit I</fullName>
    </alternativeName>
</protein>
<geneLocation type="chloroplast"/>
<feature type="chain" id="PRO_0000245659" description="NAD(P)H-quinone oxidoreductase subunit I, chloroplastic">
    <location>
        <begin position="1"/>
        <end position="167"/>
    </location>
</feature>
<feature type="domain" description="4Fe-4S ferredoxin-type 1" evidence="1">
    <location>
        <begin position="55"/>
        <end position="84"/>
    </location>
</feature>
<feature type="domain" description="4Fe-4S ferredoxin-type 2" evidence="1">
    <location>
        <begin position="95"/>
        <end position="124"/>
    </location>
</feature>
<feature type="binding site" evidence="1">
    <location>
        <position position="64"/>
    </location>
    <ligand>
        <name>[4Fe-4S] cluster</name>
        <dbReference type="ChEBI" id="CHEBI:49883"/>
        <label>1</label>
    </ligand>
</feature>
<feature type="binding site" evidence="1">
    <location>
        <position position="67"/>
    </location>
    <ligand>
        <name>[4Fe-4S] cluster</name>
        <dbReference type="ChEBI" id="CHEBI:49883"/>
        <label>1</label>
    </ligand>
</feature>
<feature type="binding site" evidence="1">
    <location>
        <position position="70"/>
    </location>
    <ligand>
        <name>[4Fe-4S] cluster</name>
        <dbReference type="ChEBI" id="CHEBI:49883"/>
        <label>1</label>
    </ligand>
</feature>
<feature type="binding site" evidence="1">
    <location>
        <position position="74"/>
    </location>
    <ligand>
        <name>[4Fe-4S] cluster</name>
        <dbReference type="ChEBI" id="CHEBI:49883"/>
        <label>2</label>
    </ligand>
</feature>
<feature type="binding site" evidence="1">
    <location>
        <position position="104"/>
    </location>
    <ligand>
        <name>[4Fe-4S] cluster</name>
        <dbReference type="ChEBI" id="CHEBI:49883"/>
        <label>2</label>
    </ligand>
</feature>
<feature type="binding site" evidence="1">
    <location>
        <position position="107"/>
    </location>
    <ligand>
        <name>[4Fe-4S] cluster</name>
        <dbReference type="ChEBI" id="CHEBI:49883"/>
        <label>2</label>
    </ligand>
</feature>
<feature type="binding site" evidence="1">
    <location>
        <position position="110"/>
    </location>
    <ligand>
        <name>[4Fe-4S] cluster</name>
        <dbReference type="ChEBI" id="CHEBI:49883"/>
        <label>2</label>
    </ligand>
</feature>
<feature type="binding site" evidence="1">
    <location>
        <position position="114"/>
    </location>
    <ligand>
        <name>[4Fe-4S] cluster</name>
        <dbReference type="ChEBI" id="CHEBI:49883"/>
        <label>1</label>
    </ligand>
</feature>